<dbReference type="EC" id="2.1.1.216" evidence="4"/>
<dbReference type="EMBL" id="AL391144">
    <property type="protein sequence ID" value="CAC01780.1"/>
    <property type="status" value="ALT_SEQ"/>
    <property type="molecule type" value="Genomic_DNA"/>
</dbReference>
<dbReference type="EMBL" id="CP002688">
    <property type="protein sequence ID" value="AED92210.2"/>
    <property type="molecule type" value="Genomic_DNA"/>
</dbReference>
<dbReference type="EMBL" id="AY080697">
    <property type="protein sequence ID" value="AAL86317.1"/>
    <property type="status" value="ALT_INIT"/>
    <property type="molecule type" value="mRNA"/>
</dbReference>
<dbReference type="PIR" id="T51410">
    <property type="entry name" value="T51410"/>
</dbReference>
<dbReference type="RefSeq" id="NP_197085.3">
    <property type="nucleotide sequence ID" value="NM_121586.3"/>
</dbReference>
<dbReference type="SMR" id="Q9LFU5"/>
<dbReference type="FunCoup" id="Q9LFU5">
    <property type="interactions" value="4474"/>
</dbReference>
<dbReference type="STRING" id="3702.Q9LFU5"/>
<dbReference type="iPTMnet" id="Q9LFU5"/>
<dbReference type="PaxDb" id="3702-AT5G15810.1"/>
<dbReference type="ProteomicsDB" id="245239"/>
<dbReference type="EnsemblPlants" id="AT5G15810.1">
    <property type="protein sequence ID" value="AT5G15810.1"/>
    <property type="gene ID" value="AT5G15810"/>
</dbReference>
<dbReference type="GeneID" id="831438"/>
<dbReference type="Gramene" id="AT5G15810.1">
    <property type="protein sequence ID" value="AT5G15810.1"/>
    <property type="gene ID" value="AT5G15810"/>
</dbReference>
<dbReference type="KEGG" id="ath:AT5G15810"/>
<dbReference type="Araport" id="AT5G15810"/>
<dbReference type="TAIR" id="AT5G15810">
    <property type="gene designation" value="TRM1B"/>
</dbReference>
<dbReference type="eggNOG" id="KOG1253">
    <property type="taxonomic scope" value="Eukaryota"/>
</dbReference>
<dbReference type="HOGENOM" id="CLU_010862_4_1_1"/>
<dbReference type="InParanoid" id="Q9LFU5"/>
<dbReference type="OMA" id="PNPTPYW"/>
<dbReference type="PhylomeDB" id="Q9LFU5"/>
<dbReference type="CD-CODE" id="4299E36E">
    <property type="entry name" value="Nucleolus"/>
</dbReference>
<dbReference type="PRO" id="PR:Q9LFU5"/>
<dbReference type="Proteomes" id="UP000006548">
    <property type="component" value="Chromosome 5"/>
</dbReference>
<dbReference type="ExpressionAtlas" id="Q9LFU5">
    <property type="expression patterns" value="baseline and differential"/>
</dbReference>
<dbReference type="GO" id="GO:0160104">
    <property type="term" value="F:tRNA (guanine(26)-N2)-dimethyltransferase activity"/>
    <property type="evidence" value="ECO:0007669"/>
    <property type="project" value="UniProtKB-EC"/>
</dbReference>
<dbReference type="GO" id="GO:0000049">
    <property type="term" value="F:tRNA binding"/>
    <property type="evidence" value="ECO:0007669"/>
    <property type="project" value="UniProtKB-KW"/>
</dbReference>
<dbReference type="GO" id="GO:0032259">
    <property type="term" value="P:methylation"/>
    <property type="evidence" value="ECO:0007669"/>
    <property type="project" value="UniProtKB-KW"/>
</dbReference>
<dbReference type="GO" id="GO:0008033">
    <property type="term" value="P:tRNA processing"/>
    <property type="evidence" value="ECO:0007669"/>
    <property type="project" value="UniProtKB-KW"/>
</dbReference>
<dbReference type="CDD" id="cd02440">
    <property type="entry name" value="AdoMet_MTases"/>
    <property type="match status" value="1"/>
</dbReference>
<dbReference type="FunFam" id="3.30.56.70:FF:000001">
    <property type="entry name" value="tRNA (guanine(26)-N(2))-dimethyltransferase"/>
    <property type="match status" value="1"/>
</dbReference>
<dbReference type="FunFam" id="3.40.50.150:FF:000114">
    <property type="entry name" value="tRNA (guanine(26)-N(2))-dimethyltransferase"/>
    <property type="match status" value="1"/>
</dbReference>
<dbReference type="Gene3D" id="3.30.56.70">
    <property type="entry name" value="N2,N2-dimethylguanosine tRNA methyltransferase, C-terminal domain"/>
    <property type="match status" value="1"/>
</dbReference>
<dbReference type="Gene3D" id="3.40.50.150">
    <property type="entry name" value="Vaccinia Virus protein VP39"/>
    <property type="match status" value="1"/>
</dbReference>
<dbReference type="InterPro" id="IPR029063">
    <property type="entry name" value="SAM-dependent_MTases_sf"/>
</dbReference>
<dbReference type="InterPro" id="IPR002905">
    <property type="entry name" value="Trm1"/>
</dbReference>
<dbReference type="InterPro" id="IPR042296">
    <property type="entry name" value="tRNA_met_Trm1_C"/>
</dbReference>
<dbReference type="NCBIfam" id="TIGR00308">
    <property type="entry name" value="TRM1"/>
    <property type="match status" value="1"/>
</dbReference>
<dbReference type="PANTHER" id="PTHR10631">
    <property type="entry name" value="N 2 ,N 2 -DIMETHYLGUANOSINE TRNA METHYLTRANSFERASE"/>
    <property type="match status" value="1"/>
</dbReference>
<dbReference type="PANTHER" id="PTHR10631:SF12">
    <property type="entry name" value="TRNA (GUANINE(26)-N(2))-DIMETHYLTRANSFERASE 1"/>
    <property type="match status" value="1"/>
</dbReference>
<dbReference type="Pfam" id="PF02005">
    <property type="entry name" value="TRM"/>
    <property type="match status" value="1"/>
</dbReference>
<dbReference type="SUPFAM" id="SSF53335">
    <property type="entry name" value="S-adenosyl-L-methionine-dependent methyltransferases"/>
    <property type="match status" value="1"/>
</dbReference>
<dbReference type="PROSITE" id="PS51626">
    <property type="entry name" value="SAM_MT_TRM1"/>
    <property type="match status" value="1"/>
</dbReference>
<comment type="function">
    <text evidence="4">Dimethylates a single guanine residue at position 26 of most tRNAs using S-adenosyl-L-methionine as donor of the methyl groups.</text>
</comment>
<comment type="catalytic activity">
    <reaction evidence="4">
        <text>guanosine(26) in tRNA + 2 S-adenosyl-L-methionine = N(2)-dimethylguanosine(26) in tRNA + 2 S-adenosyl-L-homocysteine + 2 H(+)</text>
        <dbReference type="Rhea" id="RHEA:43140"/>
        <dbReference type="Rhea" id="RHEA-COMP:10359"/>
        <dbReference type="Rhea" id="RHEA-COMP:10360"/>
        <dbReference type="ChEBI" id="CHEBI:15378"/>
        <dbReference type="ChEBI" id="CHEBI:57856"/>
        <dbReference type="ChEBI" id="CHEBI:59789"/>
        <dbReference type="ChEBI" id="CHEBI:74269"/>
        <dbReference type="ChEBI" id="CHEBI:74513"/>
        <dbReference type="EC" id="2.1.1.216"/>
    </reaction>
</comment>
<comment type="similarity">
    <text evidence="2">Belongs to the class I-like SAM-binding methyltransferase superfamily. Trm1 family.</text>
</comment>
<comment type="sequence caution" evidence="6">
    <conflict type="erroneous initiation">
        <sequence resource="EMBL-CDS" id="AAL86317"/>
    </conflict>
    <text>Extended N-terminus.</text>
</comment>
<comment type="sequence caution" evidence="6">
    <conflict type="erroneous gene model prediction">
        <sequence resource="EMBL-CDS" id="CAC01780"/>
    </conflict>
</comment>
<evidence type="ECO:0000250" key="1">
    <source>
        <dbReference type="UniProtKB" id="O67010"/>
    </source>
</evidence>
<evidence type="ECO:0000255" key="2">
    <source>
        <dbReference type="PROSITE-ProRule" id="PRU00958"/>
    </source>
</evidence>
<evidence type="ECO:0000256" key="3">
    <source>
        <dbReference type="SAM" id="MobiDB-lite"/>
    </source>
</evidence>
<evidence type="ECO:0000269" key="4">
    <source>
    </source>
</evidence>
<evidence type="ECO:0000303" key="5">
    <source>
    </source>
</evidence>
<evidence type="ECO:0000305" key="6"/>
<sequence length="593" mass="65845">METDLNDYTVIKEGEAEVLMHKKNQVFFNKAQVNNRDMSIAVLRAFIIKRKQEHEAMLSKRARSSGKVVEKDVSETSKEETPTENGDDNGKTNGEHEVTTQDGPKEAAKTAYESARRELKPPRVLEALSASGLRALRYAREVEGIGQVVALDNDPASVEACQRNIKFNGLMSTSKVESHLTDARVHMLSHPKDFDVVDLDPYGAPSIFLDSAVQSVADGGLLMCTATDMAVLCGANGEVCYSKYGSYPLKGKYCHEMALRILLASIESHANRYKRYIVPVLSVQMDFYVRVFVRVYTSASAMKNTPLKLSYVYQCIGCDSFHLQSVGRSLPKNNSVRYLPGVGPVVPQDCTHCGKKYNMGGPIWSAPIHDQEWVNSILNGVKSMKDRYPAYDRICAVLTTISEELPDVPLFLSLHSLSATLKCTSPSAALFRSAVINAKYRVSGSHVNPLGIKTDAPMEIIWDIMRCWVKNHPIKPQSPEHPGSVILSKEPSHQADFSRHVGSLSKAQAKKVARFLPNPEKHWGPKIRAGRTITSKHVSLLGHEAVNGHLNNNHKEAGDEEEEEEEEEPEEDIIEGEPELKRQKTTEDFASTS</sequence>
<name>TRM1_ARATH</name>
<keyword id="KW-0479">Metal-binding</keyword>
<keyword id="KW-0489">Methyltransferase</keyword>
<keyword id="KW-1185">Reference proteome</keyword>
<keyword id="KW-0694">RNA-binding</keyword>
<keyword id="KW-0949">S-adenosyl-L-methionine</keyword>
<keyword id="KW-0808">Transferase</keyword>
<keyword id="KW-0819">tRNA processing</keyword>
<keyword id="KW-0820">tRNA-binding</keyword>
<keyword id="KW-0862">Zinc</keyword>
<reference key="1">
    <citation type="journal article" date="2000" name="Nature">
        <title>Sequence and analysis of chromosome 5 of the plant Arabidopsis thaliana.</title>
        <authorList>
            <person name="Tabata S."/>
            <person name="Kaneko T."/>
            <person name="Nakamura Y."/>
            <person name="Kotani H."/>
            <person name="Kato T."/>
            <person name="Asamizu E."/>
            <person name="Miyajima N."/>
            <person name="Sasamoto S."/>
            <person name="Kimura T."/>
            <person name="Hosouchi T."/>
            <person name="Kawashima K."/>
            <person name="Kohara M."/>
            <person name="Matsumoto M."/>
            <person name="Matsuno A."/>
            <person name="Muraki A."/>
            <person name="Nakayama S."/>
            <person name="Nakazaki N."/>
            <person name="Naruo K."/>
            <person name="Okumura S."/>
            <person name="Shinpo S."/>
            <person name="Takeuchi C."/>
            <person name="Wada T."/>
            <person name="Watanabe A."/>
            <person name="Yamada M."/>
            <person name="Yasuda M."/>
            <person name="Sato S."/>
            <person name="de la Bastide M."/>
            <person name="Huang E."/>
            <person name="Spiegel L."/>
            <person name="Gnoj L."/>
            <person name="O'Shaughnessy A."/>
            <person name="Preston R."/>
            <person name="Habermann K."/>
            <person name="Murray J."/>
            <person name="Johnson D."/>
            <person name="Rohlfing T."/>
            <person name="Nelson J."/>
            <person name="Stoneking T."/>
            <person name="Pepin K."/>
            <person name="Spieth J."/>
            <person name="Sekhon M."/>
            <person name="Armstrong J."/>
            <person name="Becker M."/>
            <person name="Belter E."/>
            <person name="Cordum H."/>
            <person name="Cordes M."/>
            <person name="Courtney L."/>
            <person name="Courtney W."/>
            <person name="Dante M."/>
            <person name="Du H."/>
            <person name="Edwards J."/>
            <person name="Fryman J."/>
            <person name="Haakensen B."/>
            <person name="Lamar E."/>
            <person name="Latreille P."/>
            <person name="Leonard S."/>
            <person name="Meyer R."/>
            <person name="Mulvaney E."/>
            <person name="Ozersky P."/>
            <person name="Riley A."/>
            <person name="Strowmatt C."/>
            <person name="Wagner-McPherson C."/>
            <person name="Wollam A."/>
            <person name="Yoakum M."/>
            <person name="Bell M."/>
            <person name="Dedhia N."/>
            <person name="Parnell L."/>
            <person name="Shah R."/>
            <person name="Rodriguez M."/>
            <person name="Hoon See L."/>
            <person name="Vil D."/>
            <person name="Baker J."/>
            <person name="Kirchoff K."/>
            <person name="Toth K."/>
            <person name="King L."/>
            <person name="Bahret A."/>
            <person name="Miller B."/>
            <person name="Marra M.A."/>
            <person name="Martienssen R."/>
            <person name="McCombie W.R."/>
            <person name="Wilson R.K."/>
            <person name="Murphy G."/>
            <person name="Bancroft I."/>
            <person name="Volckaert G."/>
            <person name="Wambutt R."/>
            <person name="Duesterhoeft A."/>
            <person name="Stiekema W."/>
            <person name="Pohl T."/>
            <person name="Entian K.-D."/>
            <person name="Terryn N."/>
            <person name="Hartley N."/>
            <person name="Bent E."/>
            <person name="Johnson S."/>
            <person name="Langham S.-A."/>
            <person name="McCullagh B."/>
            <person name="Robben J."/>
            <person name="Grymonprez B."/>
            <person name="Zimmermann W."/>
            <person name="Ramsperger U."/>
            <person name="Wedler H."/>
            <person name="Balke K."/>
            <person name="Wedler E."/>
            <person name="Peters S."/>
            <person name="van Staveren M."/>
            <person name="Dirkse W."/>
            <person name="Mooijman P."/>
            <person name="Klein Lankhorst R."/>
            <person name="Weitzenegger T."/>
            <person name="Bothe G."/>
            <person name="Rose M."/>
            <person name="Hauf J."/>
            <person name="Berneiser S."/>
            <person name="Hempel S."/>
            <person name="Feldpausch M."/>
            <person name="Lamberth S."/>
            <person name="Villarroel R."/>
            <person name="Gielen J."/>
            <person name="Ardiles W."/>
            <person name="Bents O."/>
            <person name="Lemcke K."/>
            <person name="Kolesov G."/>
            <person name="Mayer K.F.X."/>
            <person name="Rudd S."/>
            <person name="Schoof H."/>
            <person name="Schueller C."/>
            <person name="Zaccaria P."/>
            <person name="Mewes H.-W."/>
            <person name="Bevan M."/>
            <person name="Fransz P.F."/>
        </authorList>
    </citation>
    <scope>NUCLEOTIDE SEQUENCE [LARGE SCALE GENOMIC DNA]</scope>
    <source>
        <strain>cv. Columbia</strain>
    </source>
</reference>
<reference key="2">
    <citation type="journal article" date="2017" name="Plant J.">
        <title>Araport11: a complete reannotation of the Arabidopsis thaliana reference genome.</title>
        <authorList>
            <person name="Cheng C.Y."/>
            <person name="Krishnakumar V."/>
            <person name="Chan A.P."/>
            <person name="Thibaud-Nissen F."/>
            <person name="Schobel S."/>
            <person name="Town C.D."/>
        </authorList>
    </citation>
    <scope>GENOME REANNOTATION</scope>
    <source>
        <strain>cv. Columbia</strain>
    </source>
</reference>
<reference key="3">
    <citation type="journal article" date="2003" name="Science">
        <title>Empirical analysis of transcriptional activity in the Arabidopsis genome.</title>
        <authorList>
            <person name="Yamada K."/>
            <person name="Lim J."/>
            <person name="Dale J.M."/>
            <person name="Chen H."/>
            <person name="Shinn P."/>
            <person name="Palm C.J."/>
            <person name="Southwick A.M."/>
            <person name="Wu H.C."/>
            <person name="Kim C.J."/>
            <person name="Nguyen M."/>
            <person name="Pham P.K."/>
            <person name="Cheuk R.F."/>
            <person name="Karlin-Newmann G."/>
            <person name="Liu S.X."/>
            <person name="Lam B."/>
            <person name="Sakano H."/>
            <person name="Wu T."/>
            <person name="Yu G."/>
            <person name="Miranda M."/>
            <person name="Quach H.L."/>
            <person name="Tripp M."/>
            <person name="Chang C.H."/>
            <person name="Lee J.M."/>
            <person name="Toriumi M.J."/>
            <person name="Chan M.M."/>
            <person name="Tang C.C."/>
            <person name="Onodera C.S."/>
            <person name="Deng J.M."/>
            <person name="Akiyama K."/>
            <person name="Ansari Y."/>
            <person name="Arakawa T."/>
            <person name="Banh J."/>
            <person name="Banno F."/>
            <person name="Bowser L."/>
            <person name="Brooks S.Y."/>
            <person name="Carninci P."/>
            <person name="Chao Q."/>
            <person name="Choy N."/>
            <person name="Enju A."/>
            <person name="Goldsmith A.D."/>
            <person name="Gurjal M."/>
            <person name="Hansen N.F."/>
            <person name="Hayashizaki Y."/>
            <person name="Johnson-Hopson C."/>
            <person name="Hsuan V.W."/>
            <person name="Iida K."/>
            <person name="Karnes M."/>
            <person name="Khan S."/>
            <person name="Koesema E."/>
            <person name="Ishida J."/>
            <person name="Jiang P.X."/>
            <person name="Jones T."/>
            <person name="Kawai J."/>
            <person name="Kamiya A."/>
            <person name="Meyers C."/>
            <person name="Nakajima M."/>
            <person name="Narusaka M."/>
            <person name="Seki M."/>
            <person name="Sakurai T."/>
            <person name="Satou M."/>
            <person name="Tamse R."/>
            <person name="Vaysberg M."/>
            <person name="Wallender E.K."/>
            <person name="Wong C."/>
            <person name="Yamamura Y."/>
            <person name="Yuan S."/>
            <person name="Shinozaki K."/>
            <person name="Davis R.W."/>
            <person name="Theologis A."/>
            <person name="Ecker J.R."/>
        </authorList>
    </citation>
    <scope>NUCLEOTIDE SEQUENCE [LARGE SCALE MRNA]</scope>
    <source>
        <strain>cv. Columbia</strain>
    </source>
</reference>
<reference key="4">
    <citation type="journal article" date="2020" name="PLoS ONE">
        <title>Identification of the enzymes responsible for m2,2G and acp3U formation on cytosolic tRNA from insects and plants.</title>
        <authorList>
            <person name="Funk H.M."/>
            <person name="Zhao R."/>
            <person name="Thomas M."/>
            <person name="Spigelmyer S.M."/>
            <person name="Sebree N.J."/>
            <person name="Bales R.O."/>
            <person name="Burchett J.B."/>
            <person name="Mamaril J.B."/>
            <person name="Limbach P.A."/>
            <person name="Guy M.P."/>
        </authorList>
    </citation>
    <scope>FUNCTION</scope>
    <scope>CATALYTIC ACTIVITY</scope>
    <scope>MUTAGENESIS OF ASP-200</scope>
</reference>
<feature type="chain" id="PRO_0000147675" description="tRNA (guanine(26)-N(2))-dimethyltransferase 1">
    <location>
        <begin position="1"/>
        <end position="593"/>
    </location>
</feature>
<feature type="domain" description="Trm1 methyltransferase" evidence="2">
    <location>
        <begin position="9"/>
        <end position="465"/>
    </location>
</feature>
<feature type="region of interest" description="Disordered" evidence="3">
    <location>
        <begin position="56"/>
        <end position="118"/>
    </location>
</feature>
<feature type="region of interest" description="Disordered" evidence="3">
    <location>
        <begin position="546"/>
        <end position="593"/>
    </location>
</feature>
<feature type="compositionally biased region" description="Basic and acidic residues" evidence="3">
    <location>
        <begin position="68"/>
        <end position="81"/>
    </location>
</feature>
<feature type="compositionally biased region" description="Basic and acidic residues" evidence="3">
    <location>
        <begin position="88"/>
        <end position="118"/>
    </location>
</feature>
<feature type="compositionally biased region" description="Acidic residues" evidence="3">
    <location>
        <begin position="558"/>
        <end position="577"/>
    </location>
</feature>
<feature type="compositionally biased region" description="Basic and acidic residues" evidence="3">
    <location>
        <begin position="578"/>
        <end position="587"/>
    </location>
</feature>
<feature type="binding site" evidence="1">
    <location>
        <position position="36"/>
    </location>
    <ligand>
        <name>S-adenosyl-L-methionine</name>
        <dbReference type="ChEBI" id="CHEBI:59789"/>
    </ligand>
</feature>
<feature type="binding site" evidence="1">
    <location>
        <position position="134"/>
    </location>
    <ligand>
        <name>S-adenosyl-L-methionine</name>
        <dbReference type="ChEBI" id="CHEBI:59789"/>
    </ligand>
</feature>
<feature type="binding site" evidence="1">
    <location>
        <position position="152"/>
    </location>
    <ligand>
        <name>S-adenosyl-L-methionine</name>
        <dbReference type="ChEBI" id="CHEBI:59789"/>
    </ligand>
</feature>
<feature type="binding site" evidence="1">
    <location>
        <position position="185"/>
    </location>
    <ligand>
        <name>S-adenosyl-L-methionine</name>
        <dbReference type="ChEBI" id="CHEBI:59789"/>
    </ligand>
</feature>
<feature type="binding site" evidence="1">
    <location>
        <position position="315"/>
    </location>
    <ligand>
        <name>Zn(2+)</name>
        <dbReference type="ChEBI" id="CHEBI:29105"/>
    </ligand>
</feature>
<feature type="binding site" evidence="1">
    <location>
        <position position="318"/>
    </location>
    <ligand>
        <name>Zn(2+)</name>
        <dbReference type="ChEBI" id="CHEBI:29105"/>
    </ligand>
</feature>
<feature type="binding site" evidence="1">
    <location>
        <position position="350"/>
    </location>
    <ligand>
        <name>Zn(2+)</name>
        <dbReference type="ChEBI" id="CHEBI:29105"/>
    </ligand>
</feature>
<feature type="binding site" evidence="1">
    <location>
        <position position="353"/>
    </location>
    <ligand>
        <name>Zn(2+)</name>
        <dbReference type="ChEBI" id="CHEBI:29105"/>
    </ligand>
</feature>
<feature type="mutagenesis site" description="Loss of activity." evidence="4">
    <original>D</original>
    <variation>A</variation>
    <location>
        <position position="200"/>
    </location>
</feature>
<gene>
    <name type="ordered locus">At5g15810</name>
    <name type="ORF">F14F8_190</name>
</gene>
<protein>
    <recommendedName>
        <fullName evidence="5">tRNA (guanine(26)-N(2))-dimethyltransferase 1</fullName>
        <ecNumber evidence="4">2.1.1.216</ecNumber>
    </recommendedName>
    <alternativeName>
        <fullName evidence="5">tRNA 2,2-dimethylguanosine-26 methyltransferase 1</fullName>
    </alternativeName>
    <alternativeName>
        <fullName evidence="5">tRNA(guanine-26,N(2)-N(2)) methyltransferase 1</fullName>
    </alternativeName>
    <alternativeName>
        <fullName evidence="5">tRNA(m(2,2)G26)dimethyltransferase 1</fullName>
    </alternativeName>
</protein>
<accession>Q9LFU5</accession>
<accession>F4KB92</accession>
<accession>Q8RXS4</accession>
<proteinExistence type="evidence at protein level"/>
<organism>
    <name type="scientific">Arabidopsis thaliana</name>
    <name type="common">Mouse-ear cress</name>
    <dbReference type="NCBI Taxonomy" id="3702"/>
    <lineage>
        <taxon>Eukaryota</taxon>
        <taxon>Viridiplantae</taxon>
        <taxon>Streptophyta</taxon>
        <taxon>Embryophyta</taxon>
        <taxon>Tracheophyta</taxon>
        <taxon>Spermatophyta</taxon>
        <taxon>Magnoliopsida</taxon>
        <taxon>eudicotyledons</taxon>
        <taxon>Gunneridae</taxon>
        <taxon>Pentapetalae</taxon>
        <taxon>rosids</taxon>
        <taxon>malvids</taxon>
        <taxon>Brassicales</taxon>
        <taxon>Brassicaceae</taxon>
        <taxon>Camelineae</taxon>
        <taxon>Arabidopsis</taxon>
    </lineage>
</organism>